<keyword id="KW-0010">Activator</keyword>
<keyword id="KW-0238">DNA-binding</keyword>
<keyword id="KW-0539">Nucleus</keyword>
<keyword id="KW-1185">Reference proteome</keyword>
<keyword id="KW-0804">Transcription</keyword>
<keyword id="KW-0805">Transcription regulation</keyword>
<gene>
    <name evidence="7" type="primary">NAC046</name>
    <name evidence="5" type="ordered locus">At3g04060</name>
    <name evidence="6" type="ORF">T11I18.17</name>
</gene>
<feature type="chain" id="PRO_0000442492" description="NAC domain-containing protein 46">
    <location>
        <begin position="1"/>
        <end position="338"/>
    </location>
</feature>
<feature type="domain" description="NAC" evidence="1">
    <location>
        <begin position="20"/>
        <end position="171"/>
    </location>
</feature>
<feature type="DNA-binding region" evidence="1">
    <location>
        <begin position="118"/>
        <end position="177"/>
    </location>
</feature>
<dbReference type="EMBL" id="AC011698">
    <property type="protein sequence ID" value="AAF05864.1"/>
    <property type="molecule type" value="Genomic_DNA"/>
</dbReference>
<dbReference type="EMBL" id="CP002686">
    <property type="protein sequence ID" value="AEE74032.1"/>
    <property type="molecule type" value="Genomic_DNA"/>
</dbReference>
<dbReference type="EMBL" id="AF361623">
    <property type="protein sequence ID" value="AAK32791.1"/>
    <property type="molecule type" value="mRNA"/>
</dbReference>
<dbReference type="EMBL" id="AY081834">
    <property type="protein sequence ID" value="AAL87404.1"/>
    <property type="molecule type" value="mRNA"/>
</dbReference>
<dbReference type="EMBL" id="AY084852">
    <property type="protein sequence ID" value="AAM61417.1"/>
    <property type="molecule type" value="mRNA"/>
</dbReference>
<dbReference type="RefSeq" id="NP_187056.1">
    <property type="nucleotide sequence ID" value="NM_111277.2"/>
</dbReference>
<dbReference type="SMR" id="Q9SQQ6"/>
<dbReference type="FunCoup" id="Q9SQQ6">
    <property type="interactions" value="297"/>
</dbReference>
<dbReference type="IntAct" id="Q9SQQ6">
    <property type="interactions" value="1"/>
</dbReference>
<dbReference type="STRING" id="3702.Q9SQQ6"/>
<dbReference type="PaxDb" id="3702-AT3G04060.1"/>
<dbReference type="DNASU" id="819561"/>
<dbReference type="EnsemblPlants" id="AT3G04060.1">
    <property type="protein sequence ID" value="AT3G04060.1"/>
    <property type="gene ID" value="AT3G04060"/>
</dbReference>
<dbReference type="GeneID" id="819561"/>
<dbReference type="Gramene" id="AT3G04060.1">
    <property type="protein sequence ID" value="AT3G04060.1"/>
    <property type="gene ID" value="AT3G04060"/>
</dbReference>
<dbReference type="KEGG" id="ath:AT3G04060"/>
<dbReference type="Araport" id="AT3G04060"/>
<dbReference type="TAIR" id="AT3G04060">
    <property type="gene designation" value="NAC046"/>
</dbReference>
<dbReference type="eggNOG" id="ENOG502QSPY">
    <property type="taxonomic scope" value="Eukaryota"/>
</dbReference>
<dbReference type="HOGENOM" id="CLU_035664_6_1_1"/>
<dbReference type="InParanoid" id="Q9SQQ6"/>
<dbReference type="OMA" id="NFPYHSV"/>
<dbReference type="PhylomeDB" id="Q9SQQ6"/>
<dbReference type="PRO" id="PR:Q9SQQ6"/>
<dbReference type="Proteomes" id="UP000006548">
    <property type="component" value="Chromosome 3"/>
</dbReference>
<dbReference type="ExpressionAtlas" id="Q9SQQ6">
    <property type="expression patterns" value="baseline and differential"/>
</dbReference>
<dbReference type="GO" id="GO:0005634">
    <property type="term" value="C:nucleus"/>
    <property type="evidence" value="ECO:0007669"/>
    <property type="project" value="UniProtKB-SubCell"/>
</dbReference>
<dbReference type="GO" id="GO:0003700">
    <property type="term" value="F:DNA-binding transcription factor activity"/>
    <property type="evidence" value="ECO:0000250"/>
    <property type="project" value="TAIR"/>
</dbReference>
<dbReference type="GO" id="GO:0000976">
    <property type="term" value="F:transcription cis-regulatory region binding"/>
    <property type="evidence" value="ECO:0000353"/>
    <property type="project" value="TAIR"/>
</dbReference>
<dbReference type="GO" id="GO:1903648">
    <property type="term" value="P:positive regulation of chlorophyll catabolic process"/>
    <property type="evidence" value="ECO:0000315"/>
    <property type="project" value="TAIR"/>
</dbReference>
<dbReference type="GO" id="GO:1900057">
    <property type="term" value="P:positive regulation of leaf senescence"/>
    <property type="evidence" value="ECO:0000315"/>
    <property type="project" value="TAIR"/>
</dbReference>
<dbReference type="DisProt" id="DP02225"/>
<dbReference type="FunFam" id="2.170.150.80:FF:000006">
    <property type="entry name" value="NAC domain-containing protein 100-like"/>
    <property type="match status" value="1"/>
</dbReference>
<dbReference type="Gene3D" id="2.170.150.80">
    <property type="entry name" value="NAC domain"/>
    <property type="match status" value="1"/>
</dbReference>
<dbReference type="InterPro" id="IPR003441">
    <property type="entry name" value="NAC-dom"/>
</dbReference>
<dbReference type="InterPro" id="IPR036093">
    <property type="entry name" value="NAC_dom_sf"/>
</dbReference>
<dbReference type="PANTHER" id="PTHR31744:SF73">
    <property type="entry name" value="NAC DOMAIN-CONTAINING PROTEIN 46"/>
    <property type="match status" value="1"/>
</dbReference>
<dbReference type="PANTHER" id="PTHR31744">
    <property type="entry name" value="PROTEIN CUP-SHAPED COTYLEDON 2-RELATED"/>
    <property type="match status" value="1"/>
</dbReference>
<dbReference type="Pfam" id="PF02365">
    <property type="entry name" value="NAM"/>
    <property type="match status" value="1"/>
</dbReference>
<dbReference type="SUPFAM" id="SSF101941">
    <property type="entry name" value="NAC domain"/>
    <property type="match status" value="1"/>
</dbReference>
<dbReference type="PROSITE" id="PS51005">
    <property type="entry name" value="NAC"/>
    <property type="match status" value="1"/>
</dbReference>
<proteinExistence type="evidence at protein level"/>
<accession>Q9SQQ6</accession>
<name>NAC46_ARATH</name>
<reference key="1">
    <citation type="journal article" date="2000" name="Nature">
        <title>Sequence and analysis of chromosome 3 of the plant Arabidopsis thaliana.</title>
        <authorList>
            <person name="Salanoubat M."/>
            <person name="Lemcke K."/>
            <person name="Rieger M."/>
            <person name="Ansorge W."/>
            <person name="Unseld M."/>
            <person name="Fartmann B."/>
            <person name="Valle G."/>
            <person name="Bloecker H."/>
            <person name="Perez-Alonso M."/>
            <person name="Obermaier B."/>
            <person name="Delseny M."/>
            <person name="Boutry M."/>
            <person name="Grivell L.A."/>
            <person name="Mache R."/>
            <person name="Puigdomenech P."/>
            <person name="De Simone V."/>
            <person name="Choisne N."/>
            <person name="Artiguenave F."/>
            <person name="Robert C."/>
            <person name="Brottier P."/>
            <person name="Wincker P."/>
            <person name="Cattolico L."/>
            <person name="Weissenbach J."/>
            <person name="Saurin W."/>
            <person name="Quetier F."/>
            <person name="Schaefer M."/>
            <person name="Mueller-Auer S."/>
            <person name="Gabel C."/>
            <person name="Fuchs M."/>
            <person name="Benes V."/>
            <person name="Wurmbach E."/>
            <person name="Drzonek H."/>
            <person name="Erfle H."/>
            <person name="Jordan N."/>
            <person name="Bangert S."/>
            <person name="Wiedelmann R."/>
            <person name="Kranz H."/>
            <person name="Voss H."/>
            <person name="Holland R."/>
            <person name="Brandt P."/>
            <person name="Nyakatura G."/>
            <person name="Vezzi A."/>
            <person name="D'Angelo M."/>
            <person name="Pallavicini A."/>
            <person name="Toppo S."/>
            <person name="Simionati B."/>
            <person name="Conrad A."/>
            <person name="Hornischer K."/>
            <person name="Kauer G."/>
            <person name="Loehnert T.-H."/>
            <person name="Nordsiek G."/>
            <person name="Reichelt J."/>
            <person name="Scharfe M."/>
            <person name="Schoen O."/>
            <person name="Bargues M."/>
            <person name="Terol J."/>
            <person name="Climent J."/>
            <person name="Navarro P."/>
            <person name="Collado C."/>
            <person name="Perez-Perez A."/>
            <person name="Ottenwaelder B."/>
            <person name="Duchemin D."/>
            <person name="Cooke R."/>
            <person name="Laudie M."/>
            <person name="Berger-Llauro C."/>
            <person name="Purnelle B."/>
            <person name="Masuy D."/>
            <person name="de Haan M."/>
            <person name="Maarse A.C."/>
            <person name="Alcaraz J.-P."/>
            <person name="Cottet A."/>
            <person name="Casacuberta E."/>
            <person name="Monfort A."/>
            <person name="Argiriou A."/>
            <person name="Flores M."/>
            <person name="Liguori R."/>
            <person name="Vitale D."/>
            <person name="Mannhaupt G."/>
            <person name="Haase D."/>
            <person name="Schoof H."/>
            <person name="Rudd S."/>
            <person name="Zaccaria P."/>
            <person name="Mewes H.-W."/>
            <person name="Mayer K.F.X."/>
            <person name="Kaul S."/>
            <person name="Town C.D."/>
            <person name="Koo H.L."/>
            <person name="Tallon L.J."/>
            <person name="Jenkins J."/>
            <person name="Rooney T."/>
            <person name="Rizzo M."/>
            <person name="Walts A."/>
            <person name="Utterback T."/>
            <person name="Fujii C.Y."/>
            <person name="Shea T.P."/>
            <person name="Creasy T.H."/>
            <person name="Haas B."/>
            <person name="Maiti R."/>
            <person name="Wu D."/>
            <person name="Peterson J."/>
            <person name="Van Aken S."/>
            <person name="Pai G."/>
            <person name="Militscher J."/>
            <person name="Sellers P."/>
            <person name="Gill J.E."/>
            <person name="Feldblyum T.V."/>
            <person name="Preuss D."/>
            <person name="Lin X."/>
            <person name="Nierman W.C."/>
            <person name="Salzberg S.L."/>
            <person name="White O."/>
            <person name="Venter J.C."/>
            <person name="Fraser C.M."/>
            <person name="Kaneko T."/>
            <person name="Nakamura Y."/>
            <person name="Sato S."/>
            <person name="Kato T."/>
            <person name="Asamizu E."/>
            <person name="Sasamoto S."/>
            <person name="Kimura T."/>
            <person name="Idesawa K."/>
            <person name="Kawashima K."/>
            <person name="Kishida Y."/>
            <person name="Kiyokawa C."/>
            <person name="Kohara M."/>
            <person name="Matsumoto M."/>
            <person name="Matsuno A."/>
            <person name="Muraki A."/>
            <person name="Nakayama S."/>
            <person name="Nakazaki N."/>
            <person name="Shinpo S."/>
            <person name="Takeuchi C."/>
            <person name="Wada T."/>
            <person name="Watanabe A."/>
            <person name="Yamada M."/>
            <person name="Yasuda M."/>
            <person name="Tabata S."/>
        </authorList>
    </citation>
    <scope>NUCLEOTIDE SEQUENCE [LARGE SCALE GENOMIC DNA]</scope>
    <source>
        <strain>cv. Columbia</strain>
    </source>
</reference>
<reference key="2">
    <citation type="journal article" date="2017" name="Plant J.">
        <title>Araport11: a complete reannotation of the Arabidopsis thaliana reference genome.</title>
        <authorList>
            <person name="Cheng C.Y."/>
            <person name="Krishnakumar V."/>
            <person name="Chan A.P."/>
            <person name="Thibaud-Nissen F."/>
            <person name="Schobel S."/>
            <person name="Town C.D."/>
        </authorList>
    </citation>
    <scope>GENOME REANNOTATION</scope>
    <source>
        <strain>cv. Columbia</strain>
    </source>
</reference>
<reference key="3">
    <citation type="journal article" date="2003" name="Science">
        <title>Empirical analysis of transcriptional activity in the Arabidopsis genome.</title>
        <authorList>
            <person name="Yamada K."/>
            <person name="Lim J."/>
            <person name="Dale J.M."/>
            <person name="Chen H."/>
            <person name="Shinn P."/>
            <person name="Palm C.J."/>
            <person name="Southwick A.M."/>
            <person name="Wu H.C."/>
            <person name="Kim C.J."/>
            <person name="Nguyen M."/>
            <person name="Pham P.K."/>
            <person name="Cheuk R.F."/>
            <person name="Karlin-Newmann G."/>
            <person name="Liu S.X."/>
            <person name="Lam B."/>
            <person name="Sakano H."/>
            <person name="Wu T."/>
            <person name="Yu G."/>
            <person name="Miranda M."/>
            <person name="Quach H.L."/>
            <person name="Tripp M."/>
            <person name="Chang C.H."/>
            <person name="Lee J.M."/>
            <person name="Toriumi M.J."/>
            <person name="Chan M.M."/>
            <person name="Tang C.C."/>
            <person name="Onodera C.S."/>
            <person name="Deng J.M."/>
            <person name="Akiyama K."/>
            <person name="Ansari Y."/>
            <person name="Arakawa T."/>
            <person name="Banh J."/>
            <person name="Banno F."/>
            <person name="Bowser L."/>
            <person name="Brooks S.Y."/>
            <person name="Carninci P."/>
            <person name="Chao Q."/>
            <person name="Choy N."/>
            <person name="Enju A."/>
            <person name="Goldsmith A.D."/>
            <person name="Gurjal M."/>
            <person name="Hansen N.F."/>
            <person name="Hayashizaki Y."/>
            <person name="Johnson-Hopson C."/>
            <person name="Hsuan V.W."/>
            <person name="Iida K."/>
            <person name="Karnes M."/>
            <person name="Khan S."/>
            <person name="Koesema E."/>
            <person name="Ishida J."/>
            <person name="Jiang P.X."/>
            <person name="Jones T."/>
            <person name="Kawai J."/>
            <person name="Kamiya A."/>
            <person name="Meyers C."/>
            <person name="Nakajima M."/>
            <person name="Narusaka M."/>
            <person name="Seki M."/>
            <person name="Sakurai T."/>
            <person name="Satou M."/>
            <person name="Tamse R."/>
            <person name="Vaysberg M."/>
            <person name="Wallender E.K."/>
            <person name="Wong C."/>
            <person name="Yamamura Y."/>
            <person name="Yuan S."/>
            <person name="Shinozaki K."/>
            <person name="Davis R.W."/>
            <person name="Theologis A."/>
            <person name="Ecker J.R."/>
        </authorList>
    </citation>
    <scope>NUCLEOTIDE SEQUENCE [LARGE SCALE MRNA]</scope>
    <source>
        <strain>cv. Columbia</strain>
    </source>
</reference>
<reference key="4">
    <citation type="submission" date="2002-03" db="EMBL/GenBank/DDBJ databases">
        <title>Full-length cDNA from Arabidopsis thaliana.</title>
        <authorList>
            <person name="Brover V.V."/>
            <person name="Troukhan M.E."/>
            <person name="Alexandrov N.A."/>
            <person name="Lu Y.-P."/>
            <person name="Flavell R.B."/>
            <person name="Feldmann K.A."/>
        </authorList>
    </citation>
    <scope>NUCLEOTIDE SEQUENCE [LARGE SCALE MRNA]</scope>
</reference>
<reference key="5">
    <citation type="journal article" date="2003" name="DNA Res.">
        <title>Comprehensive analysis of NAC family genes in Oryza sativa and Arabidopsis thaliana.</title>
        <authorList>
            <person name="Ooka H."/>
            <person name="Satoh K."/>
            <person name="Doi K."/>
            <person name="Nagata T."/>
            <person name="Otomo Y."/>
            <person name="Murakami K."/>
            <person name="Matsubara K."/>
            <person name="Osato N."/>
            <person name="Kawai J."/>
            <person name="Carninci P."/>
            <person name="Hayashizaki Y."/>
            <person name="Suzuki K."/>
            <person name="Kojima K."/>
            <person name="Takahara Y."/>
            <person name="Yamamoto K."/>
            <person name="Kikuchi S."/>
        </authorList>
    </citation>
    <scope>GENE FAMILY</scope>
    <scope>NOMENCLATURE</scope>
</reference>
<reference key="6">
    <citation type="journal article" date="2015" name="Biochem. J.">
        <title>Protein intrinsic disorder in Arabidopsis NAC transcription factors: transcriptional activation by ANAC013 and ANAC046 and their interactions with RCD1.</title>
        <authorList>
            <person name="O'Shea C."/>
            <person name="Kryger M."/>
            <person name="Stender E.G."/>
            <person name="Kragelund B.B."/>
            <person name="Willemoes M."/>
            <person name="Skriver K."/>
        </authorList>
    </citation>
    <scope>INTERACTION WITH RCD1</scope>
</reference>
<reference key="7">
    <citation type="journal article" date="2016" name="Sci. Rep.">
        <title>The NAC transcription factor ANAC046 is a positive regulator of chlorophyll degradation and senescence in Arabidopsis leaves.</title>
        <authorList>
            <person name="Oda-Yamamizo C."/>
            <person name="Mitsuda N."/>
            <person name="Sakamoto S."/>
            <person name="Ogawa D."/>
            <person name="Ohme-Takagi M."/>
            <person name="Ohmiya A."/>
        </authorList>
    </citation>
    <scope>FUNCTION</scope>
</reference>
<evidence type="ECO:0000255" key="1">
    <source>
        <dbReference type="PROSITE-ProRule" id="PRU00353"/>
    </source>
</evidence>
<evidence type="ECO:0000269" key="2">
    <source>
    </source>
</evidence>
<evidence type="ECO:0000269" key="3">
    <source>
    </source>
</evidence>
<evidence type="ECO:0000303" key="4">
    <source>
    </source>
</evidence>
<evidence type="ECO:0000312" key="5">
    <source>
        <dbReference type="Araport" id="AT3G04060"/>
    </source>
</evidence>
<evidence type="ECO:0000312" key="6">
    <source>
        <dbReference type="EMBL" id="AAF05864.1"/>
    </source>
</evidence>
<evidence type="ECO:0000312" key="7">
    <source>
        <dbReference type="EMBL" id="AEE74032.1"/>
    </source>
</evidence>
<protein>
    <recommendedName>
        <fullName evidence="4">NAC domain-containing protein 46</fullName>
        <shortName evidence="4">ANAC046</shortName>
    </recommendedName>
</protein>
<sequence>MVEEGGVVVNQGGDQEVVDLPPGFRFHPTDEEIITHYLKEKVFNIRFTAAAIGQADLNKNEPWDLPKIAKMGEKEFYFFCQRDRKYPTGMRTNRATVSGYWKATGKDKEIFRGKGCLVGMKKTLVFYTGRAPKGEKTNWVMHEYRLDGKYSYHNLPKTARDEWVVCRVFHKNAPSTTITTTKQLSRIDSLDNIDHLLDFSSLPPLIDPGFLGQPGPSFSGARQQHDLKPVLHHPTTAPVDNTYLPTQALNFPYHSVHNSGSDFGYGAGSGNNNKGMIKLEHSLVSVSQETGLSSDVNTTATPEISSYPMMMNPAMMDGSKSACDGLDDLIFWEDLYTS</sequence>
<comment type="function">
    <text evidence="3">Transcriptional activator that acts as a positive regulator of leaf senescence. Activates NYC1, SGR1, SGR2 and PAO, which are genes involved in chlorophyll catabolic processes. Activates senescence-associated genes, such as RNS1, SAG12 and SAG13.</text>
</comment>
<comment type="subunit">
    <text evidence="2">Interacts with RCD1.</text>
</comment>
<comment type="subcellular location">
    <subcellularLocation>
        <location evidence="1">Nucleus</location>
    </subcellularLocation>
</comment>
<comment type="domain">
    <text evidence="1">The NAC domain includes a DNA binding domain and a dimerization domain.</text>
</comment>
<comment type="miscellaneous">
    <text evidence="3">Plants overexpressing NAC046 exhibit early-senescence phenotype and reduced chlorophyll content. Plants silencing NAC046 exhibit delayed-senescence phenotype and increased chlorophyll content.</text>
</comment>
<organism>
    <name type="scientific">Arabidopsis thaliana</name>
    <name type="common">Mouse-ear cress</name>
    <dbReference type="NCBI Taxonomy" id="3702"/>
    <lineage>
        <taxon>Eukaryota</taxon>
        <taxon>Viridiplantae</taxon>
        <taxon>Streptophyta</taxon>
        <taxon>Embryophyta</taxon>
        <taxon>Tracheophyta</taxon>
        <taxon>Spermatophyta</taxon>
        <taxon>Magnoliopsida</taxon>
        <taxon>eudicotyledons</taxon>
        <taxon>Gunneridae</taxon>
        <taxon>Pentapetalae</taxon>
        <taxon>rosids</taxon>
        <taxon>malvids</taxon>
        <taxon>Brassicales</taxon>
        <taxon>Brassicaceae</taxon>
        <taxon>Camelineae</taxon>
        <taxon>Arabidopsis</taxon>
    </lineage>
</organism>